<reference key="1">
    <citation type="submission" date="2007-05" db="EMBL/GenBank/DDBJ databases">
        <title>Complete sequence of Thermotoga petrophila RKU-1.</title>
        <authorList>
            <consortium name="US DOE Joint Genome Institute"/>
            <person name="Copeland A."/>
            <person name="Lucas S."/>
            <person name="Lapidus A."/>
            <person name="Barry K."/>
            <person name="Glavina del Rio T."/>
            <person name="Dalin E."/>
            <person name="Tice H."/>
            <person name="Pitluck S."/>
            <person name="Sims D."/>
            <person name="Brettin T."/>
            <person name="Bruce D."/>
            <person name="Detter J.C."/>
            <person name="Han C."/>
            <person name="Tapia R."/>
            <person name="Schmutz J."/>
            <person name="Larimer F."/>
            <person name="Land M."/>
            <person name="Hauser L."/>
            <person name="Kyrpides N."/>
            <person name="Mikhailova N."/>
            <person name="Nelson K."/>
            <person name="Gogarten J.P."/>
            <person name="Noll K."/>
            <person name="Richardson P."/>
        </authorList>
    </citation>
    <scope>NUCLEOTIDE SEQUENCE [LARGE SCALE GENOMIC DNA]</scope>
    <source>
        <strain>ATCC BAA-488 / DSM 13995 / JCM 10881 / RKU-1</strain>
    </source>
</reference>
<sequence>MFEEMILEKVRKEAERIAEEQGLEIFDVQYRRESRGWVLRIIIDNPVGYVSVRDCELFSREIERFLDREDLIEHSYTLEVSSPGLDRPLRGPKDYVRFTGKLAKIVTKDGKTFIGRIESFVDGTITISDEKRKYEINIDDVKRANLEVEF</sequence>
<name>RIMP_THEP1</name>
<comment type="function">
    <text evidence="1">Required for maturation of 30S ribosomal subunits.</text>
</comment>
<comment type="subcellular location">
    <subcellularLocation>
        <location evidence="1">Cytoplasm</location>
    </subcellularLocation>
</comment>
<comment type="similarity">
    <text evidence="1">Belongs to the RimP family.</text>
</comment>
<evidence type="ECO:0000255" key="1">
    <source>
        <dbReference type="HAMAP-Rule" id="MF_01077"/>
    </source>
</evidence>
<protein>
    <recommendedName>
        <fullName evidence="1">Ribosome maturation factor RimP</fullName>
    </recommendedName>
</protein>
<proteinExistence type="inferred from homology"/>
<feature type="chain" id="PRO_1000064794" description="Ribosome maturation factor RimP">
    <location>
        <begin position="1"/>
        <end position="150"/>
    </location>
</feature>
<accession>A5ILL0</accession>
<keyword id="KW-0963">Cytoplasm</keyword>
<keyword id="KW-0690">Ribosome biogenesis</keyword>
<gene>
    <name evidence="1" type="primary">rimP</name>
    <name type="ordered locus">Tpet_1066</name>
</gene>
<organism>
    <name type="scientific">Thermotoga petrophila (strain ATCC BAA-488 / DSM 13995 / JCM 10881 / RKU-1)</name>
    <dbReference type="NCBI Taxonomy" id="390874"/>
    <lineage>
        <taxon>Bacteria</taxon>
        <taxon>Thermotogati</taxon>
        <taxon>Thermotogota</taxon>
        <taxon>Thermotogae</taxon>
        <taxon>Thermotogales</taxon>
        <taxon>Thermotogaceae</taxon>
        <taxon>Thermotoga</taxon>
    </lineage>
</organism>
<dbReference type="EMBL" id="CP000702">
    <property type="protein sequence ID" value="ABQ47083.1"/>
    <property type="molecule type" value="Genomic_DNA"/>
</dbReference>
<dbReference type="RefSeq" id="WP_011943611.1">
    <property type="nucleotide sequence ID" value="NC_009486.1"/>
</dbReference>
<dbReference type="SMR" id="A5ILL0"/>
<dbReference type="STRING" id="390874.Tpet_1066"/>
<dbReference type="KEGG" id="tpt:Tpet_1066"/>
<dbReference type="eggNOG" id="COG0779">
    <property type="taxonomic scope" value="Bacteria"/>
</dbReference>
<dbReference type="HOGENOM" id="CLU_070525_2_2_0"/>
<dbReference type="Proteomes" id="UP000006558">
    <property type="component" value="Chromosome"/>
</dbReference>
<dbReference type="GO" id="GO:0005829">
    <property type="term" value="C:cytosol"/>
    <property type="evidence" value="ECO:0007669"/>
    <property type="project" value="TreeGrafter"/>
</dbReference>
<dbReference type="GO" id="GO:0000028">
    <property type="term" value="P:ribosomal small subunit assembly"/>
    <property type="evidence" value="ECO:0007669"/>
    <property type="project" value="TreeGrafter"/>
</dbReference>
<dbReference type="GO" id="GO:0006412">
    <property type="term" value="P:translation"/>
    <property type="evidence" value="ECO:0007669"/>
    <property type="project" value="TreeGrafter"/>
</dbReference>
<dbReference type="CDD" id="cd01734">
    <property type="entry name" value="YlxS_C"/>
    <property type="match status" value="1"/>
</dbReference>
<dbReference type="FunFam" id="3.30.300.70:FF:000001">
    <property type="entry name" value="Ribosome maturation factor RimP"/>
    <property type="match status" value="1"/>
</dbReference>
<dbReference type="Gene3D" id="2.30.30.180">
    <property type="entry name" value="Ribosome maturation factor RimP, C-terminal domain"/>
    <property type="match status" value="1"/>
</dbReference>
<dbReference type="Gene3D" id="3.30.300.70">
    <property type="entry name" value="RimP-like superfamily, N-terminal"/>
    <property type="match status" value="1"/>
</dbReference>
<dbReference type="HAMAP" id="MF_01077">
    <property type="entry name" value="RimP"/>
    <property type="match status" value="1"/>
</dbReference>
<dbReference type="InterPro" id="IPR003728">
    <property type="entry name" value="Ribosome_maturation_RimP"/>
</dbReference>
<dbReference type="InterPro" id="IPR028998">
    <property type="entry name" value="RimP_C"/>
</dbReference>
<dbReference type="InterPro" id="IPR036847">
    <property type="entry name" value="RimP_C_sf"/>
</dbReference>
<dbReference type="InterPro" id="IPR028989">
    <property type="entry name" value="RimP_N"/>
</dbReference>
<dbReference type="InterPro" id="IPR035956">
    <property type="entry name" value="RimP_N_sf"/>
</dbReference>
<dbReference type="NCBIfam" id="NF011231">
    <property type="entry name" value="PRK14638.1"/>
    <property type="match status" value="1"/>
</dbReference>
<dbReference type="PANTHER" id="PTHR33867">
    <property type="entry name" value="RIBOSOME MATURATION FACTOR RIMP"/>
    <property type="match status" value="1"/>
</dbReference>
<dbReference type="PANTHER" id="PTHR33867:SF1">
    <property type="entry name" value="RIBOSOME MATURATION FACTOR RIMP"/>
    <property type="match status" value="1"/>
</dbReference>
<dbReference type="Pfam" id="PF17384">
    <property type="entry name" value="DUF150_C"/>
    <property type="match status" value="1"/>
</dbReference>
<dbReference type="Pfam" id="PF02576">
    <property type="entry name" value="RimP_N"/>
    <property type="match status" value="1"/>
</dbReference>
<dbReference type="SUPFAM" id="SSF74942">
    <property type="entry name" value="YhbC-like, C-terminal domain"/>
    <property type="match status" value="1"/>
</dbReference>
<dbReference type="SUPFAM" id="SSF75420">
    <property type="entry name" value="YhbC-like, N-terminal domain"/>
    <property type="match status" value="1"/>
</dbReference>